<name>PSAD_TRIV2</name>
<evidence type="ECO:0000256" key="1">
    <source>
        <dbReference type="SAM" id="MobiDB-lite"/>
    </source>
</evidence>
<evidence type="ECO:0000269" key="2">
    <source>
    </source>
</evidence>
<evidence type="ECO:0000305" key="3"/>
<proteinExistence type="evidence at protein level"/>
<keyword id="KW-0903">Direct protein sequencing</keyword>
<keyword id="KW-0602">Photosynthesis</keyword>
<keyword id="KW-0603">Photosystem I</keyword>
<gene>
    <name type="primary">psaD</name>
    <name type="ordered locus">Ava_4722</name>
</gene>
<comment type="function">
    <text>PsaD can form complexes with ferredoxin and ferredoxin-oxidoreductase in photosystem I (PS I) reaction center.</text>
</comment>
<comment type="similarity">
    <text evidence="3">Belongs to the PsaD family.</text>
</comment>
<organism>
    <name type="scientific">Trichormus variabilis (strain ATCC 29413 / PCC 7937)</name>
    <name type="common">Anabaena variabilis</name>
    <dbReference type="NCBI Taxonomy" id="240292"/>
    <lineage>
        <taxon>Bacteria</taxon>
        <taxon>Bacillati</taxon>
        <taxon>Cyanobacteriota</taxon>
        <taxon>Cyanophyceae</taxon>
        <taxon>Nostocales</taxon>
        <taxon>Nostocaceae</taxon>
        <taxon>Trichormus</taxon>
    </lineage>
</organism>
<dbReference type="EMBL" id="CP000117">
    <property type="protein sequence ID" value="ABA24319.1"/>
    <property type="molecule type" value="Genomic_DNA"/>
</dbReference>
<dbReference type="PIR" id="C42799">
    <property type="entry name" value="C42799"/>
</dbReference>
<dbReference type="SMR" id="P31089"/>
<dbReference type="STRING" id="240292.Ava_4722"/>
<dbReference type="KEGG" id="ava:Ava_4722"/>
<dbReference type="eggNOG" id="ENOG502ZBN6">
    <property type="taxonomic scope" value="Bacteria"/>
</dbReference>
<dbReference type="HOGENOM" id="CLU_150527_0_0_3"/>
<dbReference type="Proteomes" id="UP000002533">
    <property type="component" value="Chromosome"/>
</dbReference>
<dbReference type="GO" id="GO:0009538">
    <property type="term" value="C:photosystem I reaction center"/>
    <property type="evidence" value="ECO:0007669"/>
    <property type="project" value="InterPro"/>
</dbReference>
<dbReference type="GO" id="GO:0015979">
    <property type="term" value="P:photosynthesis"/>
    <property type="evidence" value="ECO:0007669"/>
    <property type="project" value="UniProtKB-KW"/>
</dbReference>
<dbReference type="Gene3D" id="3.30.1470.10">
    <property type="entry name" value="Photosystem I PsaD, reaction center subunit II"/>
    <property type="match status" value="1"/>
</dbReference>
<dbReference type="InterPro" id="IPR003685">
    <property type="entry name" value="PsaD"/>
</dbReference>
<dbReference type="InterPro" id="IPR036579">
    <property type="entry name" value="PsaD_sf"/>
</dbReference>
<dbReference type="PANTHER" id="PTHR31982:SF5">
    <property type="entry name" value="PHOTOSYSTEM I REACTION CENTER SUBUNIT II, CHLOROPLASTIC"/>
    <property type="match status" value="1"/>
</dbReference>
<dbReference type="PANTHER" id="PTHR31982">
    <property type="entry name" value="PHOTOSYSTEM I REACTION CENTER SUBUNIT II-1, CHLOROPLASTIC-RELATED"/>
    <property type="match status" value="1"/>
</dbReference>
<dbReference type="Pfam" id="PF02531">
    <property type="entry name" value="PsaD"/>
    <property type="match status" value="1"/>
</dbReference>
<dbReference type="SUPFAM" id="SSF64234">
    <property type="entry name" value="Photosystem I subunit PsaD"/>
    <property type="match status" value="1"/>
</dbReference>
<sequence>MAETLSGKTPLFAGSTGGLLTKAVEEEKYAITWTSPKAQVFELPTGGAATMHEGENLLYIARKEYGIALGGQLRKFKITNYKIYRILPSGETTFIHPADGVFPEKVNPGREKVRFNARSIGENPNPSQVKFSGKATYDA</sequence>
<feature type="initiator methionine" description="Removed" evidence="2">
    <location>
        <position position="1"/>
    </location>
</feature>
<feature type="chain" id="PRO_0000206049" description="Photosystem I reaction center subunit II">
    <location>
        <begin position="2"/>
        <end position="139"/>
    </location>
</feature>
<feature type="region of interest" description="Disordered" evidence="1">
    <location>
        <begin position="119"/>
        <end position="139"/>
    </location>
</feature>
<accession>P31089</accession>
<accession>Q3M3W7</accession>
<protein>
    <recommendedName>
        <fullName>Photosystem I reaction center subunit II</fullName>
    </recommendedName>
    <alternativeName>
        <fullName>Photosystem I 16 kDa polypeptide</fullName>
        <shortName>PSI-D</shortName>
    </alternativeName>
</protein>
<reference key="1">
    <citation type="journal article" date="2014" name="Stand. Genomic Sci.">
        <title>Complete genome sequence of Anabaena variabilis ATCC 29413.</title>
        <authorList>
            <person name="Thiel T."/>
            <person name="Pratte B.S."/>
            <person name="Zhong J."/>
            <person name="Goodwin L."/>
            <person name="Copeland A."/>
            <person name="Lucas S."/>
            <person name="Han C."/>
            <person name="Pitluck S."/>
            <person name="Land M.L."/>
            <person name="Kyrpides N.C."/>
            <person name="Woyke T."/>
        </authorList>
    </citation>
    <scope>NUCLEOTIDE SEQUENCE [LARGE SCALE GENOMIC DNA]</scope>
    <source>
        <strain>ATCC 29413 / PCC 7937</strain>
    </source>
</reference>
<reference key="2">
    <citation type="journal article" date="1992" name="J. Biol. Chem.">
        <title>Purification and characterization of the photosystem I complex from the filamentous cyanobacterium Anabaena variabilis ATCC 29413.</title>
        <authorList>
            <person name="Nyhus K.J."/>
            <person name="Ikeuchi M."/>
            <person name="Inoue Y."/>
            <person name="Whitmarsh J."/>
            <person name="Pakrasi H.B."/>
        </authorList>
    </citation>
    <scope>PROTEIN SEQUENCE OF 2-44</scope>
</reference>